<organism>
    <name type="scientific">Escherichia coli (strain K12)</name>
    <dbReference type="NCBI Taxonomy" id="83333"/>
    <lineage>
        <taxon>Bacteria</taxon>
        <taxon>Pseudomonadati</taxon>
        <taxon>Pseudomonadota</taxon>
        <taxon>Gammaproteobacteria</taxon>
        <taxon>Enterobacterales</taxon>
        <taxon>Enterobacteriaceae</taxon>
        <taxon>Escherichia</taxon>
    </lineage>
</organism>
<protein>
    <recommendedName>
        <fullName>UPF0758 protein YkfG</fullName>
    </recommendedName>
</protein>
<proteinExistence type="inferred from homology"/>
<sequence length="158" mass="18099">MKQLSFLPGEMTPQDRRLIQRALRALDRHLHEPGVAFTSTHAVREWLRLHMAALEREEFRVLYLDNQNQLIAHETLFTGTINRTEVHPREVVKRALHFNAAAVILAHNHPSGETTPSQADKTLTQRLVQVLQLVDIRVPDHLIVGGRQIYSFAEHGLL</sequence>
<reference key="1">
    <citation type="submission" date="1996-02" db="EMBL/GenBank/DDBJ databases">
        <title>Systematic sequencing of the Escherichia coli genome: analysis of the 4.0 - 6.0 min (189,987 - 281,416bp) region.</title>
        <authorList>
            <person name="Takemoto K."/>
            <person name="Mori H."/>
            <person name="Murayama N."/>
            <person name="Kataoka K."/>
            <person name="Yano M."/>
            <person name="Itoh T."/>
            <person name="Yamamoto Y."/>
            <person name="Inokuchi H."/>
            <person name="Miki T."/>
            <person name="Hatada E."/>
            <person name="Fukuda R."/>
            <person name="Ichihara S."/>
            <person name="Mizuno T."/>
            <person name="Makino K."/>
            <person name="Nakata A."/>
            <person name="Yura T."/>
            <person name="Sampei G."/>
            <person name="Mizobuchi K."/>
        </authorList>
    </citation>
    <scope>NUCLEOTIDE SEQUENCE [LARGE SCALE GENOMIC DNA]</scope>
    <source>
        <strain>K12 / W3110 / ATCC 27325 / DSM 5911</strain>
    </source>
</reference>
<reference key="2">
    <citation type="submission" date="1997-01" db="EMBL/GenBank/DDBJ databases">
        <title>Sequence of minutes 4-25 of Escherichia coli.</title>
        <authorList>
            <person name="Chung E."/>
            <person name="Allen E."/>
            <person name="Araujo R."/>
            <person name="Aparicio A.M."/>
            <person name="Davis K."/>
            <person name="Duncan M."/>
            <person name="Federspiel N."/>
            <person name="Hyman R."/>
            <person name="Kalman S."/>
            <person name="Komp C."/>
            <person name="Kurdi O."/>
            <person name="Lew H."/>
            <person name="Lin D."/>
            <person name="Namath A."/>
            <person name="Oefner P."/>
            <person name="Roberts D."/>
            <person name="Schramm S."/>
            <person name="Davis R.W."/>
        </authorList>
    </citation>
    <scope>NUCLEOTIDE SEQUENCE [LARGE SCALE GENOMIC DNA]</scope>
    <source>
        <strain>K12 / MG1655 / ATCC 47076</strain>
    </source>
</reference>
<reference key="3">
    <citation type="journal article" date="1997" name="Science">
        <title>The complete genome sequence of Escherichia coli K-12.</title>
        <authorList>
            <person name="Blattner F.R."/>
            <person name="Plunkett G. III"/>
            <person name="Bloch C.A."/>
            <person name="Perna N.T."/>
            <person name="Burland V."/>
            <person name="Riley M."/>
            <person name="Collado-Vides J."/>
            <person name="Glasner J.D."/>
            <person name="Rode C.K."/>
            <person name="Mayhew G.F."/>
            <person name="Gregor J."/>
            <person name="Davis N.W."/>
            <person name="Kirkpatrick H.A."/>
            <person name="Goeden M.A."/>
            <person name="Rose D.J."/>
            <person name="Mau B."/>
            <person name="Shao Y."/>
        </authorList>
    </citation>
    <scope>NUCLEOTIDE SEQUENCE [LARGE SCALE GENOMIC DNA]</scope>
    <source>
        <strain>K12 / MG1655 / ATCC 47076</strain>
    </source>
</reference>
<reference key="4">
    <citation type="journal article" date="2006" name="Mol. Syst. Biol.">
        <title>Highly accurate genome sequences of Escherichia coli K-12 strains MG1655 and W3110.</title>
        <authorList>
            <person name="Hayashi K."/>
            <person name="Morooka N."/>
            <person name="Yamamoto Y."/>
            <person name="Fujita K."/>
            <person name="Isono K."/>
            <person name="Choi S."/>
            <person name="Ohtsubo E."/>
            <person name="Baba T."/>
            <person name="Wanner B.L."/>
            <person name="Mori H."/>
            <person name="Horiuchi T."/>
        </authorList>
    </citation>
    <scope>NUCLEOTIDE SEQUENCE [LARGE SCALE GENOMIC DNA]</scope>
    <source>
        <strain>K12 / W3110 / ATCC 27325 / DSM 5911</strain>
    </source>
</reference>
<gene>
    <name type="primary">ykfG</name>
    <name type="ordered locus">b0247</name>
    <name type="ordered locus">JW0236</name>
</gene>
<feature type="chain" id="PRO_0000190764" description="UPF0758 protein YkfG">
    <location>
        <begin position="1"/>
        <end position="158"/>
    </location>
</feature>
<feature type="domain" description="MPN" evidence="1">
    <location>
        <begin position="36"/>
        <end position="158"/>
    </location>
</feature>
<feature type="short sequence motif" description="JAMM motif" evidence="1">
    <location>
        <begin position="107"/>
        <end position="120"/>
    </location>
</feature>
<feature type="binding site" evidence="1">
    <location>
        <position position="107"/>
    </location>
    <ligand>
        <name>Zn(2+)</name>
        <dbReference type="ChEBI" id="CHEBI:29105"/>
        <note>catalytic</note>
    </ligand>
</feature>
<feature type="binding site" evidence="1">
    <location>
        <position position="109"/>
    </location>
    <ligand>
        <name>Zn(2+)</name>
        <dbReference type="ChEBI" id="CHEBI:29105"/>
        <note>catalytic</note>
    </ligand>
</feature>
<feature type="binding site" evidence="1">
    <location>
        <position position="120"/>
    </location>
    <ligand>
        <name>Zn(2+)</name>
        <dbReference type="ChEBI" id="CHEBI:29105"/>
        <note>catalytic</note>
    </ligand>
</feature>
<evidence type="ECO:0000255" key="1">
    <source>
        <dbReference type="PROSITE-ProRule" id="PRU01182"/>
    </source>
</evidence>
<evidence type="ECO:0000305" key="2"/>
<comment type="similarity">
    <text evidence="2">Belongs to the UPF0758 family.</text>
</comment>
<dbReference type="EMBL" id="U70214">
    <property type="protein sequence ID" value="AAB08667.1"/>
    <property type="molecule type" value="Genomic_DNA"/>
</dbReference>
<dbReference type="EMBL" id="U00096">
    <property type="protein sequence ID" value="AAC73350.1"/>
    <property type="molecule type" value="Genomic_DNA"/>
</dbReference>
<dbReference type="EMBL" id="AP009048">
    <property type="protein sequence ID" value="BAA77916.1"/>
    <property type="molecule type" value="Genomic_DNA"/>
</dbReference>
<dbReference type="PIR" id="G64749">
    <property type="entry name" value="G64749"/>
</dbReference>
<dbReference type="RefSeq" id="NP_414781.1">
    <property type="nucleotide sequence ID" value="NC_000913.3"/>
</dbReference>
<dbReference type="RefSeq" id="WP_000811693.1">
    <property type="nucleotide sequence ID" value="NZ_LN832404.1"/>
</dbReference>
<dbReference type="SMR" id="Q47685"/>
<dbReference type="BioGRID" id="4261092">
    <property type="interactions" value="96"/>
</dbReference>
<dbReference type="FunCoup" id="Q47685">
    <property type="interactions" value="33"/>
</dbReference>
<dbReference type="IntAct" id="Q47685">
    <property type="interactions" value="2"/>
</dbReference>
<dbReference type="STRING" id="511145.b0247"/>
<dbReference type="PaxDb" id="511145-b0247"/>
<dbReference type="EnsemblBacteria" id="AAC73350">
    <property type="protein sequence ID" value="AAC73350"/>
    <property type="gene ID" value="b0247"/>
</dbReference>
<dbReference type="GeneID" id="944930"/>
<dbReference type="KEGG" id="ecj:JW0236"/>
<dbReference type="KEGG" id="eco:b0247"/>
<dbReference type="KEGG" id="ecoc:C3026_01175"/>
<dbReference type="KEGG" id="ecoc:C3026_23910"/>
<dbReference type="PATRIC" id="fig|1411691.4.peg.2035"/>
<dbReference type="EchoBASE" id="EB4077"/>
<dbReference type="eggNOG" id="COG2003">
    <property type="taxonomic scope" value="Bacteria"/>
</dbReference>
<dbReference type="HOGENOM" id="CLU_073529_3_1_6"/>
<dbReference type="InParanoid" id="Q47685"/>
<dbReference type="OMA" id="MSCNSLA"/>
<dbReference type="OrthoDB" id="9804482at2"/>
<dbReference type="PhylomeDB" id="Q47685"/>
<dbReference type="BioCyc" id="EcoCyc:G6122-MONOMER"/>
<dbReference type="PRO" id="PR:Q47685"/>
<dbReference type="Proteomes" id="UP000000625">
    <property type="component" value="Chromosome"/>
</dbReference>
<dbReference type="GO" id="GO:0046872">
    <property type="term" value="F:metal ion binding"/>
    <property type="evidence" value="ECO:0007669"/>
    <property type="project" value="UniProtKB-KW"/>
</dbReference>
<dbReference type="GO" id="GO:0008237">
    <property type="term" value="F:metallopeptidase activity"/>
    <property type="evidence" value="ECO:0007669"/>
    <property type="project" value="UniProtKB-KW"/>
</dbReference>
<dbReference type="GO" id="GO:0006974">
    <property type="term" value="P:DNA damage response"/>
    <property type="evidence" value="ECO:0000270"/>
    <property type="project" value="EcoCyc"/>
</dbReference>
<dbReference type="GO" id="GO:0006508">
    <property type="term" value="P:proteolysis"/>
    <property type="evidence" value="ECO:0007669"/>
    <property type="project" value="UniProtKB-KW"/>
</dbReference>
<dbReference type="CDD" id="cd08071">
    <property type="entry name" value="MPN_DUF2466"/>
    <property type="match status" value="1"/>
</dbReference>
<dbReference type="Gene3D" id="3.40.140.10">
    <property type="entry name" value="Cytidine Deaminase, domain 2"/>
    <property type="match status" value="1"/>
</dbReference>
<dbReference type="InterPro" id="IPR037518">
    <property type="entry name" value="MPN"/>
</dbReference>
<dbReference type="InterPro" id="IPR025657">
    <property type="entry name" value="RadC_JAB"/>
</dbReference>
<dbReference type="InterPro" id="IPR001405">
    <property type="entry name" value="UPF0758"/>
</dbReference>
<dbReference type="InterPro" id="IPR020891">
    <property type="entry name" value="UPF0758_CS"/>
</dbReference>
<dbReference type="NCBIfam" id="TIGR00608">
    <property type="entry name" value="radc"/>
    <property type="match status" value="1"/>
</dbReference>
<dbReference type="PANTHER" id="PTHR30471">
    <property type="entry name" value="DNA REPAIR PROTEIN RADC"/>
    <property type="match status" value="1"/>
</dbReference>
<dbReference type="PANTHER" id="PTHR30471:SF3">
    <property type="entry name" value="UPF0758 PROTEIN YEES-RELATED"/>
    <property type="match status" value="1"/>
</dbReference>
<dbReference type="Pfam" id="PF04002">
    <property type="entry name" value="RadC"/>
    <property type="match status" value="1"/>
</dbReference>
<dbReference type="SUPFAM" id="SSF102712">
    <property type="entry name" value="JAB1/MPN domain"/>
    <property type="match status" value="1"/>
</dbReference>
<dbReference type="PROSITE" id="PS50249">
    <property type="entry name" value="MPN"/>
    <property type="match status" value="1"/>
</dbReference>
<dbReference type="PROSITE" id="PS01302">
    <property type="entry name" value="UPF0758"/>
    <property type="match status" value="1"/>
</dbReference>
<name>YKFG_ECOLI</name>
<accession>Q47685</accession>
<keyword id="KW-0378">Hydrolase</keyword>
<keyword id="KW-0479">Metal-binding</keyword>
<keyword id="KW-0482">Metalloprotease</keyword>
<keyword id="KW-0645">Protease</keyword>
<keyword id="KW-1185">Reference proteome</keyword>
<keyword id="KW-0862">Zinc</keyword>